<accession>P64854</accession>
<accession>A0A1R3XYG1</accession>
<accession>O53171</accession>
<accession>P71761</accession>
<accession>X2BI22</accession>
<gene>
    <name type="ordered locus">BQ2027_MB1516</name>
</gene>
<organism>
    <name type="scientific">Mycobacterium bovis (strain ATCC BAA-935 / AF2122/97)</name>
    <dbReference type="NCBI Taxonomy" id="233413"/>
    <lineage>
        <taxon>Bacteria</taxon>
        <taxon>Bacillati</taxon>
        <taxon>Actinomycetota</taxon>
        <taxon>Actinomycetes</taxon>
        <taxon>Mycobacteriales</taxon>
        <taxon>Mycobacteriaceae</taxon>
        <taxon>Mycobacterium</taxon>
        <taxon>Mycobacterium tuberculosis complex</taxon>
    </lineage>
</organism>
<evidence type="ECO:0000305" key="1"/>
<protein>
    <recommendedName>
        <fullName>Uncharacterized protein Mb1516</fullName>
    </recommendedName>
</protein>
<comment type="similarity">
    <text evidence="1">To M.avium MAV169.</text>
</comment>
<dbReference type="EMBL" id="LT708304">
    <property type="protein sequence ID" value="SIU00119.1"/>
    <property type="molecule type" value="Genomic_DNA"/>
</dbReference>
<dbReference type="RefSeq" id="NP_855168.1">
    <property type="nucleotide sequence ID" value="NC_002945.3"/>
</dbReference>
<dbReference type="RefSeq" id="WP_003407529.1">
    <property type="nucleotide sequence ID" value="NC_002945.4"/>
</dbReference>
<dbReference type="SMR" id="P64854"/>
<dbReference type="KEGG" id="mbo:BQ2027_MB1516"/>
<dbReference type="PATRIC" id="fig|233413.5.peg.1657"/>
<dbReference type="Proteomes" id="UP000001419">
    <property type="component" value="Chromosome"/>
</dbReference>
<dbReference type="InterPro" id="IPR002881">
    <property type="entry name" value="DUF58"/>
</dbReference>
<dbReference type="InterPro" id="IPR036465">
    <property type="entry name" value="vWFA_dom_sf"/>
</dbReference>
<dbReference type="PANTHER" id="PTHR33608">
    <property type="entry name" value="BLL2464 PROTEIN"/>
    <property type="match status" value="1"/>
</dbReference>
<dbReference type="PANTHER" id="PTHR33608:SF6">
    <property type="entry name" value="BLL2464 PROTEIN"/>
    <property type="match status" value="1"/>
</dbReference>
<dbReference type="Pfam" id="PF01882">
    <property type="entry name" value="DUF58"/>
    <property type="match status" value="1"/>
</dbReference>
<dbReference type="SUPFAM" id="SSF53300">
    <property type="entry name" value="vWA-like"/>
    <property type="match status" value="1"/>
</dbReference>
<feature type="chain" id="PRO_0000103850" description="Uncharacterized protein Mb1516">
    <location>
        <begin position="1"/>
        <end position="317"/>
    </location>
</feature>
<keyword id="KW-1185">Reference proteome</keyword>
<reference key="1">
    <citation type="journal article" date="2003" name="Proc. Natl. Acad. Sci. U.S.A.">
        <title>The complete genome sequence of Mycobacterium bovis.</title>
        <authorList>
            <person name="Garnier T."/>
            <person name="Eiglmeier K."/>
            <person name="Camus J.-C."/>
            <person name="Medina N."/>
            <person name="Mansoor H."/>
            <person name="Pryor M."/>
            <person name="Duthoy S."/>
            <person name="Grondin S."/>
            <person name="Lacroix C."/>
            <person name="Monsempe C."/>
            <person name="Simon S."/>
            <person name="Harris B."/>
            <person name="Atkin R."/>
            <person name="Doggett J."/>
            <person name="Mayes R."/>
            <person name="Keating L."/>
            <person name="Wheeler P.R."/>
            <person name="Parkhill J."/>
            <person name="Barrell B.G."/>
            <person name="Cole S.T."/>
            <person name="Gordon S.V."/>
            <person name="Hewinson R.G."/>
        </authorList>
    </citation>
    <scope>NUCLEOTIDE SEQUENCE [LARGE SCALE GENOMIC DNA]</scope>
    <source>
        <strain>ATCC BAA-935 / AF2122/97</strain>
    </source>
</reference>
<reference key="2">
    <citation type="journal article" date="2017" name="Genome Announc.">
        <title>Updated reference genome sequence and annotation of Mycobacterium bovis AF2122/97.</title>
        <authorList>
            <person name="Malone K.M."/>
            <person name="Farrell D."/>
            <person name="Stuber T.P."/>
            <person name="Schubert O.T."/>
            <person name="Aebersold R."/>
            <person name="Robbe-Austerman S."/>
            <person name="Gordon S.V."/>
        </authorList>
    </citation>
    <scope>NUCLEOTIDE SEQUENCE [LARGE SCALE GENOMIC DNA]</scope>
    <scope>GENOME REANNOTATION</scope>
    <source>
        <strain>ATCC BAA-935 / AF2122/97</strain>
    </source>
</reference>
<proteinExistence type="predicted"/>
<name>Y1516_MYCBO</name>
<sequence>MTESKAPAVVHPPSMLRGDIDDPKLAAALRTLELTVKQKLDGVLHGDHLGLIPGPGSEPGESRLYQPGDDVRRMDWAVTARTTHPHVRQMIADRELETWLVVDMSASLDFGTACCEKRDLAVAAAAAITFLNSGGGNRLGALIANGAAMTRVPARTGRQHQHTMLRTIATMPQAPAGVRGDLAVAIDALRRPERRRGMAVIISDFLGPINWMRPLRAIAARHEVLAIEVLDPRDVELPDVGDVVLQDAESGVVREFSIDPALRDDFARAAAAHRADVARTIRGCGAPLLSLRTDRDWLADIVRFVASRRRGALAGHQ</sequence>